<comment type="function">
    <text evidence="1">Cell wall formation. Synthesis of cross-linked peptidoglycan from the lipid intermediates. The enzyme has a penicillin-insensitive transglycosylase N-terminal domain (formation of linear glycan strands) and a penicillin-sensitive transpeptidase C-terminal domain (cross-linking of the peptide subunits).</text>
</comment>
<comment type="catalytic activity">
    <reaction evidence="2">
        <text>[GlcNAc-(1-&gt;4)-Mur2Ac(oyl-L-Ala-gamma-D-Glu-L-Lys-D-Ala-D-Ala)](n)-di-trans,octa-cis-undecaprenyl diphosphate + beta-D-GlcNAc-(1-&gt;4)-Mur2Ac(oyl-L-Ala-gamma-D-Glu-L-Lys-D-Ala-D-Ala)-di-trans,octa-cis-undecaprenyl diphosphate = [GlcNAc-(1-&gt;4)-Mur2Ac(oyl-L-Ala-gamma-D-Glu-L-Lys-D-Ala-D-Ala)](n+1)-di-trans,octa-cis-undecaprenyl diphosphate + di-trans,octa-cis-undecaprenyl diphosphate + H(+)</text>
        <dbReference type="Rhea" id="RHEA:23708"/>
        <dbReference type="Rhea" id="RHEA-COMP:9602"/>
        <dbReference type="Rhea" id="RHEA-COMP:9603"/>
        <dbReference type="ChEBI" id="CHEBI:15378"/>
        <dbReference type="ChEBI" id="CHEBI:58405"/>
        <dbReference type="ChEBI" id="CHEBI:60033"/>
        <dbReference type="ChEBI" id="CHEBI:78435"/>
        <dbReference type="EC" id="2.4.99.28"/>
    </reaction>
</comment>
<comment type="catalytic activity">
    <reaction evidence="2">
        <text>Preferential cleavage: (Ac)2-L-Lys-D-Ala-|-D-Ala. Also transpeptidation of peptidyl-alanyl moieties that are N-acyl substituents of D-alanine.</text>
        <dbReference type="EC" id="3.4.16.4"/>
    </reaction>
</comment>
<comment type="pathway">
    <text>Cell wall biogenesis; peptidoglycan biosynthesis.</text>
</comment>
<comment type="subcellular location">
    <subcellularLocation>
        <location evidence="1">Cell inner membrane</location>
        <topology evidence="1">Single-pass type II membrane protein</topology>
    </subcellularLocation>
</comment>
<comment type="similarity">
    <text evidence="6">In the N-terminal section; belongs to the glycosyltransferase 51 family.</text>
</comment>
<comment type="similarity">
    <text evidence="6">In the C-terminal section; belongs to the transpeptidase family.</text>
</comment>
<gene>
    <name type="primary">mrcA</name>
    <name type="synonym">ponA</name>
    <name type="ordered locus">NMA0655</name>
</gene>
<feature type="chain" id="PRO_0000083171" description="Penicillin-binding protein 1A">
    <location>
        <begin position="1"/>
        <end position="798"/>
    </location>
</feature>
<feature type="topological domain" description="Cytoplasmic" evidence="4">
    <location>
        <begin position="1"/>
        <end position="9"/>
    </location>
</feature>
<feature type="transmembrane region" description="Helical; Signal-anchor for type II membrane protein" evidence="4">
    <location>
        <begin position="10"/>
        <end position="30"/>
    </location>
</feature>
<feature type="topological domain" description="Periplasmic" evidence="4">
    <location>
        <begin position="31"/>
        <end position="798"/>
    </location>
</feature>
<feature type="region of interest" description="Transglycosylase">
    <location>
        <begin position="50"/>
        <end position="218"/>
    </location>
</feature>
<feature type="region of interest" description="Transpeptidase">
    <location>
        <begin position="378"/>
        <end position="700"/>
    </location>
</feature>
<feature type="region of interest" description="Disordered" evidence="5">
    <location>
        <begin position="738"/>
        <end position="798"/>
    </location>
</feature>
<feature type="compositionally biased region" description="Basic and acidic residues" evidence="5">
    <location>
        <begin position="768"/>
        <end position="777"/>
    </location>
</feature>
<feature type="compositionally biased region" description="Polar residues" evidence="5">
    <location>
        <begin position="783"/>
        <end position="798"/>
    </location>
</feature>
<feature type="active site" description="Proton donor; for transglycosylase activity" evidence="3">
    <location>
        <position position="88"/>
    </location>
</feature>
<feature type="active site" description="Acyl-ester intermediate; for transpeptidase activity" evidence="3">
    <location>
        <position position="461"/>
    </location>
</feature>
<accession>P0A0Z5</accession>
<accession>A1IQ90</accession>
<accession>O05194</accession>
<reference key="1">
    <citation type="journal article" date="1997" name="J. Bacteriol.">
        <title>Cloning and characterization of the ponA gene encoding penicillin-binding protein 1 from Neisseria gonorrhoeae and Neisseria meningitidis.</title>
        <authorList>
            <person name="Ropp P.A."/>
            <person name="Nicholas R.A."/>
        </authorList>
    </citation>
    <scope>NUCLEOTIDE SEQUENCE [GENOMIC DNA]</scope>
    <source>
        <strain>DSM 15465 / Z2491</strain>
    </source>
</reference>
<reference key="2">
    <citation type="journal article" date="2000" name="Nature">
        <title>Complete DNA sequence of a serogroup A strain of Neisseria meningitidis Z2491.</title>
        <authorList>
            <person name="Parkhill J."/>
            <person name="Achtman M."/>
            <person name="James K.D."/>
            <person name="Bentley S.D."/>
            <person name="Churcher C.M."/>
            <person name="Klee S.R."/>
            <person name="Morelli G."/>
            <person name="Basham D."/>
            <person name="Brown D."/>
            <person name="Chillingworth T."/>
            <person name="Davies R.M."/>
            <person name="Davis P."/>
            <person name="Devlin K."/>
            <person name="Feltwell T."/>
            <person name="Hamlin N."/>
            <person name="Holroyd S."/>
            <person name="Jagels K."/>
            <person name="Leather S."/>
            <person name="Moule S."/>
            <person name="Mungall K.L."/>
            <person name="Quail M.A."/>
            <person name="Rajandream M.A."/>
            <person name="Rutherford K.M."/>
            <person name="Simmonds M."/>
            <person name="Skelton J."/>
            <person name="Whitehead S."/>
            <person name="Spratt B.G."/>
            <person name="Barrell B.G."/>
        </authorList>
    </citation>
    <scope>NUCLEOTIDE SEQUENCE [LARGE SCALE GENOMIC DNA]</scope>
    <source>
        <strain>DSM 15465 / Z2491</strain>
    </source>
</reference>
<sequence>MIKKILTTCFGLVFGFCVFGVGLVAIAILVTYPKLPSLDSLQHYQPKMPLTIYSADGEVIGMYGEQRREFTKIGDFPEVLRNAVIAAEDKRFYRHWGVDVWGVARAAVGNVVSGSVQSGASTITQQVAKNFYLSSEKTFTRKFNEVLLAYKIEQSLSKDKILELYFNQIYLGQRAYGFASAAQIYFNKNVRDLTLAEAAMLAGLPKAPSAYNPIVNPERAKLRQKYILNNMLEEKMITVQQRDQALNEELHYERFVRKIDQSALYVAEMVRQELYEKYGEDAYTQGFKVYTTVRADHQKVATEALRKALRNFDRGSSYRGAENYIDLSKSEDVEETVSQYLSGLYTVDKMVPAVVLDVTKKKNVVIQLPGGRRVTLDRRALGFAARAVNNEKMGEDRIRRGAVIRVKNNGGRWAVVQEPLLQGALVSLDAKTGAVRALVGGYDFHSKTFNRAVQAMRQPGSTFKPFVYSAALSKGMTASTVVNDAPISLPGKGPNGSVWTPKNSDGRYSGYITLRQALTASKNMVSIRILMSIGVGYAQQYIRRFGFRSSELPASLSMALGTGETTPLKVAEAYSVFANGGYRVSSHVIDKIYDRDGRLRAQMQPLVAGQNAPQAIDPRNAYIMYKIMQDVVRVGTARGAAALGRTDIAGKTGTTNDNKDAWFVGFNPDVVTAVYIGFDKPKSMGRVGYGGTIAVPVWVDYMRFALKGKQGKGMKMPEGVVSSNGEYYMKERMVTDPGLTLDNSGIAPQPSRRAKEDDGGAAEGGRQAADDEVRQDMQETPVLPSNTGSKQQQLDSLF</sequence>
<evidence type="ECO:0000250" key="1"/>
<evidence type="ECO:0000250" key="2">
    <source>
        <dbReference type="UniProtKB" id="P02918"/>
    </source>
</evidence>
<evidence type="ECO:0000250" key="3">
    <source>
        <dbReference type="UniProtKB" id="P02919"/>
    </source>
</evidence>
<evidence type="ECO:0000255" key="4"/>
<evidence type="ECO:0000256" key="5">
    <source>
        <dbReference type="SAM" id="MobiDB-lite"/>
    </source>
</evidence>
<evidence type="ECO:0000305" key="6"/>
<organism>
    <name type="scientific">Neisseria meningitidis serogroup A / serotype 4A (strain DSM 15465 / Z2491)</name>
    <dbReference type="NCBI Taxonomy" id="122587"/>
    <lineage>
        <taxon>Bacteria</taxon>
        <taxon>Pseudomonadati</taxon>
        <taxon>Pseudomonadota</taxon>
        <taxon>Betaproteobacteria</taxon>
        <taxon>Neisseriales</taxon>
        <taxon>Neisseriaceae</taxon>
        <taxon>Neisseria</taxon>
    </lineage>
</organism>
<protein>
    <recommendedName>
        <fullName>Penicillin-binding protein 1A</fullName>
        <shortName>PBP-1a</shortName>
        <shortName>PBP1a</shortName>
    </recommendedName>
    <domain>
        <recommendedName>
            <fullName>Penicillin-insensitive transglycosylase</fullName>
            <ecNumber evidence="2">2.4.99.28</ecNumber>
        </recommendedName>
        <alternativeName>
            <fullName>Peptidoglycan TGase</fullName>
        </alternativeName>
    </domain>
    <domain>
        <recommendedName>
            <fullName>Penicillin-sensitive transpeptidase</fullName>
            <ecNumber evidence="2">3.4.16.4</ecNumber>
        </recommendedName>
        <alternativeName>
            <fullName>DD-transpeptidase</fullName>
        </alternativeName>
    </domain>
</protein>
<keyword id="KW-0046">Antibiotic resistance</keyword>
<keyword id="KW-0121">Carboxypeptidase</keyword>
<keyword id="KW-0997">Cell inner membrane</keyword>
<keyword id="KW-1003">Cell membrane</keyword>
<keyword id="KW-0133">Cell shape</keyword>
<keyword id="KW-0961">Cell wall biogenesis/degradation</keyword>
<keyword id="KW-0328">Glycosyltransferase</keyword>
<keyword id="KW-0378">Hydrolase</keyword>
<keyword id="KW-0472">Membrane</keyword>
<keyword id="KW-0511">Multifunctional enzyme</keyword>
<keyword id="KW-0573">Peptidoglycan synthesis</keyword>
<keyword id="KW-0645">Protease</keyword>
<keyword id="KW-0735">Signal-anchor</keyword>
<keyword id="KW-0808">Transferase</keyword>
<keyword id="KW-0812">Transmembrane</keyword>
<keyword id="KW-1133">Transmembrane helix</keyword>
<dbReference type="EC" id="2.4.99.28" evidence="2"/>
<dbReference type="EC" id="3.4.16.4" evidence="2"/>
<dbReference type="EMBL" id="U80933">
    <property type="protein sequence ID" value="AAB52541.1"/>
    <property type="molecule type" value="Genomic_DNA"/>
</dbReference>
<dbReference type="EMBL" id="AL157959">
    <property type="protein sequence ID" value="CAM07918.1"/>
    <property type="molecule type" value="Genomic_DNA"/>
</dbReference>
<dbReference type="PIR" id="H81040">
    <property type="entry name" value="H81040"/>
</dbReference>
<dbReference type="RefSeq" id="WP_002219786.1">
    <property type="nucleotide sequence ID" value="NC_003116.1"/>
</dbReference>
<dbReference type="SMR" id="P0A0Z5"/>
<dbReference type="CAZy" id="GT51">
    <property type="family name" value="Glycosyltransferase Family 51"/>
</dbReference>
<dbReference type="EnsemblBacteria" id="CAM07918">
    <property type="protein sequence ID" value="CAM07918"/>
    <property type="gene ID" value="NMA0655"/>
</dbReference>
<dbReference type="KEGG" id="nma:NMA0655"/>
<dbReference type="HOGENOM" id="CLU_006354_2_4_4"/>
<dbReference type="UniPathway" id="UPA00219"/>
<dbReference type="Proteomes" id="UP000000626">
    <property type="component" value="Chromosome"/>
</dbReference>
<dbReference type="GO" id="GO:0030288">
    <property type="term" value="C:outer membrane-bounded periplasmic space"/>
    <property type="evidence" value="ECO:0007669"/>
    <property type="project" value="TreeGrafter"/>
</dbReference>
<dbReference type="GO" id="GO:0005886">
    <property type="term" value="C:plasma membrane"/>
    <property type="evidence" value="ECO:0007669"/>
    <property type="project" value="UniProtKB-SubCell"/>
</dbReference>
<dbReference type="GO" id="GO:0008658">
    <property type="term" value="F:penicillin binding"/>
    <property type="evidence" value="ECO:0007669"/>
    <property type="project" value="InterPro"/>
</dbReference>
<dbReference type="GO" id="GO:0008955">
    <property type="term" value="F:peptidoglycan glycosyltransferase activity"/>
    <property type="evidence" value="ECO:0007669"/>
    <property type="project" value="RHEA"/>
</dbReference>
<dbReference type="GO" id="GO:0009002">
    <property type="term" value="F:serine-type D-Ala-D-Ala carboxypeptidase activity"/>
    <property type="evidence" value="ECO:0007669"/>
    <property type="project" value="UniProtKB-EC"/>
</dbReference>
<dbReference type="GO" id="GO:0071555">
    <property type="term" value="P:cell wall organization"/>
    <property type="evidence" value="ECO:0007669"/>
    <property type="project" value="UniProtKB-KW"/>
</dbReference>
<dbReference type="GO" id="GO:0009252">
    <property type="term" value="P:peptidoglycan biosynthetic process"/>
    <property type="evidence" value="ECO:0007669"/>
    <property type="project" value="UniProtKB-UniPathway"/>
</dbReference>
<dbReference type="GO" id="GO:0006508">
    <property type="term" value="P:proteolysis"/>
    <property type="evidence" value="ECO:0007669"/>
    <property type="project" value="UniProtKB-KW"/>
</dbReference>
<dbReference type="GO" id="GO:0008360">
    <property type="term" value="P:regulation of cell shape"/>
    <property type="evidence" value="ECO:0007669"/>
    <property type="project" value="UniProtKB-KW"/>
</dbReference>
<dbReference type="GO" id="GO:0046677">
    <property type="term" value="P:response to antibiotic"/>
    <property type="evidence" value="ECO:0007669"/>
    <property type="project" value="UniProtKB-KW"/>
</dbReference>
<dbReference type="FunFam" id="3.40.710.10:FF:000041">
    <property type="entry name" value="Penicillin-binding protein 1A"/>
    <property type="match status" value="1"/>
</dbReference>
<dbReference type="FunFam" id="1.10.3810.10:FF:000003">
    <property type="entry name" value="Penicillin-binding protein 1a"/>
    <property type="match status" value="1"/>
</dbReference>
<dbReference type="Gene3D" id="1.10.3810.10">
    <property type="entry name" value="Biosynthetic peptidoglycan transglycosylase-like"/>
    <property type="match status" value="1"/>
</dbReference>
<dbReference type="Gene3D" id="3.40.710.10">
    <property type="entry name" value="DD-peptidase/beta-lactamase superfamily"/>
    <property type="match status" value="2"/>
</dbReference>
<dbReference type="InterPro" id="IPR012338">
    <property type="entry name" value="Beta-lactam/transpept-like"/>
</dbReference>
<dbReference type="InterPro" id="IPR001264">
    <property type="entry name" value="Glyco_trans_51"/>
</dbReference>
<dbReference type="InterPro" id="IPR050396">
    <property type="entry name" value="Glycosyltr_51/Transpeptidase"/>
</dbReference>
<dbReference type="InterPro" id="IPR023346">
    <property type="entry name" value="Lysozyme-like_dom_sf"/>
</dbReference>
<dbReference type="InterPro" id="IPR036950">
    <property type="entry name" value="PBP_transglycosylase"/>
</dbReference>
<dbReference type="InterPro" id="IPR031376">
    <property type="entry name" value="PCB_OB"/>
</dbReference>
<dbReference type="InterPro" id="IPR001460">
    <property type="entry name" value="PCN-bd_Tpept"/>
</dbReference>
<dbReference type="NCBIfam" id="TIGR02074">
    <property type="entry name" value="PBP_1a_fam"/>
    <property type="match status" value="1"/>
</dbReference>
<dbReference type="PANTHER" id="PTHR32282">
    <property type="entry name" value="BINDING PROTEIN TRANSPEPTIDASE, PUTATIVE-RELATED"/>
    <property type="match status" value="1"/>
</dbReference>
<dbReference type="PANTHER" id="PTHR32282:SF27">
    <property type="entry name" value="PENICILLIN-BINDING PROTEIN 1A"/>
    <property type="match status" value="1"/>
</dbReference>
<dbReference type="Pfam" id="PF17092">
    <property type="entry name" value="PCB_OB"/>
    <property type="match status" value="1"/>
</dbReference>
<dbReference type="Pfam" id="PF00912">
    <property type="entry name" value="Transgly"/>
    <property type="match status" value="1"/>
</dbReference>
<dbReference type="Pfam" id="PF00905">
    <property type="entry name" value="Transpeptidase"/>
    <property type="match status" value="1"/>
</dbReference>
<dbReference type="SUPFAM" id="SSF56601">
    <property type="entry name" value="beta-lactamase/transpeptidase-like"/>
    <property type="match status" value="1"/>
</dbReference>
<dbReference type="SUPFAM" id="SSF53955">
    <property type="entry name" value="Lysozyme-like"/>
    <property type="match status" value="1"/>
</dbReference>
<proteinExistence type="inferred from homology"/>
<name>PBPA_NEIMA</name>